<name>DEGPL_PSEF1</name>
<sequence length="479" mass="50338">MSMPSLKKYAAALFAVFLMGQSVAAHAQLPDFTPLVEAASPAVVNISTRQKVPNAVASNGGLSVPDLEGLPPMFREFFERSIPQQPRAPGGGGRQREAQSLGSGFIISKDGYILTNNHVVADADEIIVRLSDRSELEAKLIGTDPRSDVALLKVEANDLPTVKLGNSDNLKVGEWVLAIGSPFGFDHSVTAGIVSAKGRSLPNESYVPFIQTDVAINPGNSGGPLFNLDGEVVGINSQIFTRSGGFMGLSFAIPMSVAMDVADQLKASGKVSRGWLGVVIQEVNKDLAESFGLEKPAGALVAQVLEDGPAAKGGLQVGDVILSLDGKPIIMSADLPHLVGALKPGTKANLEIVREGSRKTLKVAVGTMPADDGDEATNDAAPSAERSSNRLGVSVAELTDEQKKALDLRGGVVIREVQDGPAALIGLRPGDVITHLNNQAITSAKNFTEVAQSLPKNRSVSMRVLRQGRASFITFKLAE</sequence>
<organism>
    <name type="scientific">Pseudomonas fulva (strain 12-X)</name>
    <dbReference type="NCBI Taxonomy" id="743720"/>
    <lineage>
        <taxon>Bacteria</taxon>
        <taxon>Pseudomonadati</taxon>
        <taxon>Pseudomonadota</taxon>
        <taxon>Gammaproteobacteria</taxon>
        <taxon>Pseudomonadales</taxon>
        <taxon>Pseudomonadaceae</taxon>
        <taxon>Pseudomonas</taxon>
    </lineage>
</organism>
<reference key="1">
    <citation type="submission" date="2011-04" db="EMBL/GenBank/DDBJ databases">
        <title>Complete sequence of Pseudomonas fulva 12-X.</title>
        <authorList>
            <consortium name="US DOE Joint Genome Institute"/>
            <person name="Lucas S."/>
            <person name="Han J."/>
            <person name="Lapidus A."/>
            <person name="Cheng J.-F."/>
            <person name="Goodwin L."/>
            <person name="Pitluck S."/>
            <person name="Peters L."/>
            <person name="Mikhailova N."/>
            <person name="Pagani I."/>
            <person name="Davenport K."/>
            <person name="Han C."/>
            <person name="Tapia R."/>
            <person name="Land M."/>
            <person name="Hauser L."/>
            <person name="Kyrpides N."/>
            <person name="Ivanova N."/>
            <person name="Pagani I."/>
            <person name="Lcollab F.I."/>
            <person name="Woyke T."/>
        </authorList>
    </citation>
    <scope>NUCLEOTIDE SEQUENCE [LARGE SCALE GENOMIC DNA]</scope>
    <source>
        <strain>12-X</strain>
    </source>
</reference>
<evidence type="ECO:0000250" key="1"/>
<evidence type="ECO:0000255" key="2"/>
<evidence type="ECO:0000255" key="3">
    <source>
        <dbReference type="PROSITE-ProRule" id="PRU00143"/>
    </source>
</evidence>
<evidence type="ECO:0000256" key="4">
    <source>
        <dbReference type="SAM" id="MobiDB-lite"/>
    </source>
</evidence>
<evidence type="ECO:0000305" key="5"/>
<gene>
    <name type="ordered locus">Psefu_3239</name>
</gene>
<proteinExistence type="inferred from homology"/>
<keyword id="KW-0378">Hydrolase</keyword>
<keyword id="KW-0574">Periplasm</keyword>
<keyword id="KW-0645">Protease</keyword>
<keyword id="KW-1185">Reference proteome</keyword>
<keyword id="KW-0677">Repeat</keyword>
<keyword id="KW-0720">Serine protease</keyword>
<keyword id="KW-0732">Signal</keyword>
<keyword id="KW-0346">Stress response</keyword>
<accession>F6AA62</accession>
<protein>
    <recommendedName>
        <fullName>Probable periplasmic serine endoprotease DegP-like</fullName>
        <ecNumber>3.4.21.107</ecNumber>
    </recommendedName>
    <alternativeName>
        <fullName>Protease Do</fullName>
    </alternativeName>
</protein>
<feature type="signal peptide" evidence="2">
    <location>
        <begin position="1"/>
        <end position="27"/>
    </location>
</feature>
<feature type="chain" id="PRO_5000747883" description="Probable periplasmic serine endoprotease DegP-like">
    <location>
        <begin position="28"/>
        <end position="479"/>
    </location>
</feature>
<feature type="domain" description="PDZ 1" evidence="3">
    <location>
        <begin position="265"/>
        <end position="356"/>
    </location>
</feature>
<feature type="domain" description="PDZ 2" evidence="3">
    <location>
        <begin position="362"/>
        <end position="468"/>
    </location>
</feature>
<feature type="region of interest" description="Disordered" evidence="4">
    <location>
        <begin position="368"/>
        <end position="390"/>
    </location>
</feature>
<feature type="active site" description="Charge relay system" evidence="1">
    <location>
        <position position="118"/>
    </location>
</feature>
<feature type="active site" description="Charge relay system" evidence="2">
    <location>
        <position position="148"/>
    </location>
</feature>
<feature type="active site" description="Charge relay system" evidence="1">
    <location>
        <position position="221"/>
    </location>
</feature>
<feature type="binding site" evidence="1">
    <location>
        <begin position="219"/>
        <end position="221"/>
    </location>
    <ligand>
        <name>substrate</name>
    </ligand>
</feature>
<feature type="binding site" evidence="1">
    <location>
        <begin position="276"/>
        <end position="280"/>
    </location>
    <ligand>
        <name>substrate</name>
    </ligand>
</feature>
<comment type="function">
    <text evidence="1">Might be efficient in the degradation of transiently denatured and unfolded proteins which accumulate in the periplasm following stress conditions.</text>
</comment>
<comment type="catalytic activity">
    <reaction>
        <text>Acts on substrates that are at least partially unfolded. The cleavage site P1 residue is normally between a pair of hydrophobic residues, such as Val-|-Val.</text>
        <dbReference type="EC" id="3.4.21.107"/>
    </reaction>
</comment>
<comment type="subcellular location">
    <subcellularLocation>
        <location evidence="5">Periplasm</location>
    </subcellularLocation>
</comment>
<comment type="similarity">
    <text evidence="5">Belongs to the peptidase S1C family.</text>
</comment>
<dbReference type="EC" id="3.4.21.107"/>
<dbReference type="EMBL" id="CP002727">
    <property type="protein sequence ID" value="AEF23201.1"/>
    <property type="molecule type" value="Genomic_DNA"/>
</dbReference>
<dbReference type="SMR" id="F6AA62"/>
<dbReference type="STRING" id="743720.Psefu_3239"/>
<dbReference type="KEGG" id="pfv:Psefu_3239"/>
<dbReference type="eggNOG" id="COG0265">
    <property type="taxonomic scope" value="Bacteria"/>
</dbReference>
<dbReference type="HOGENOM" id="CLU_020120_1_0_6"/>
<dbReference type="Proteomes" id="UP000000686">
    <property type="component" value="Chromosome"/>
</dbReference>
<dbReference type="GO" id="GO:0042597">
    <property type="term" value="C:periplasmic space"/>
    <property type="evidence" value="ECO:0007669"/>
    <property type="project" value="UniProtKB-SubCell"/>
</dbReference>
<dbReference type="GO" id="GO:0004252">
    <property type="term" value="F:serine-type endopeptidase activity"/>
    <property type="evidence" value="ECO:0007669"/>
    <property type="project" value="InterPro"/>
</dbReference>
<dbReference type="GO" id="GO:0006508">
    <property type="term" value="P:proteolysis"/>
    <property type="evidence" value="ECO:0007669"/>
    <property type="project" value="UniProtKB-KW"/>
</dbReference>
<dbReference type="CDD" id="cd10839">
    <property type="entry name" value="cpPDZ1_DegP-like"/>
    <property type="match status" value="1"/>
</dbReference>
<dbReference type="CDD" id="cd23084">
    <property type="entry name" value="cpPDZ2_DegP-like"/>
    <property type="match status" value="1"/>
</dbReference>
<dbReference type="FunFam" id="2.30.42.10:FF:000037">
    <property type="entry name" value="Periplasmic serine endoprotease DegP-like"/>
    <property type="match status" value="1"/>
</dbReference>
<dbReference type="FunFam" id="2.40.10.120:FF:000007">
    <property type="entry name" value="Periplasmic serine endoprotease DegP-like"/>
    <property type="match status" value="1"/>
</dbReference>
<dbReference type="Gene3D" id="2.30.42.10">
    <property type="match status" value="2"/>
</dbReference>
<dbReference type="Gene3D" id="2.40.10.120">
    <property type="match status" value="1"/>
</dbReference>
<dbReference type="InterPro" id="IPR001478">
    <property type="entry name" value="PDZ"/>
</dbReference>
<dbReference type="InterPro" id="IPR036034">
    <property type="entry name" value="PDZ_sf"/>
</dbReference>
<dbReference type="InterPro" id="IPR011782">
    <property type="entry name" value="Pept_S1C_Do"/>
</dbReference>
<dbReference type="InterPro" id="IPR009003">
    <property type="entry name" value="Peptidase_S1_PA"/>
</dbReference>
<dbReference type="InterPro" id="IPR001940">
    <property type="entry name" value="Peptidase_S1C"/>
</dbReference>
<dbReference type="NCBIfam" id="TIGR02037">
    <property type="entry name" value="degP_htrA_DO"/>
    <property type="match status" value="1"/>
</dbReference>
<dbReference type="PANTHER" id="PTHR22939:SF130">
    <property type="entry name" value="PERIPLASMIC SERINE ENDOPROTEASE DEGP-LIKE-RELATED"/>
    <property type="match status" value="1"/>
</dbReference>
<dbReference type="PANTHER" id="PTHR22939">
    <property type="entry name" value="SERINE PROTEASE FAMILY S1C HTRA-RELATED"/>
    <property type="match status" value="1"/>
</dbReference>
<dbReference type="Pfam" id="PF13180">
    <property type="entry name" value="PDZ_2"/>
    <property type="match status" value="2"/>
</dbReference>
<dbReference type="Pfam" id="PF13365">
    <property type="entry name" value="Trypsin_2"/>
    <property type="match status" value="1"/>
</dbReference>
<dbReference type="PRINTS" id="PR00834">
    <property type="entry name" value="PROTEASES2C"/>
</dbReference>
<dbReference type="SMART" id="SM00228">
    <property type="entry name" value="PDZ"/>
    <property type="match status" value="2"/>
</dbReference>
<dbReference type="SUPFAM" id="SSF50156">
    <property type="entry name" value="PDZ domain-like"/>
    <property type="match status" value="2"/>
</dbReference>
<dbReference type="SUPFAM" id="SSF50494">
    <property type="entry name" value="Trypsin-like serine proteases"/>
    <property type="match status" value="1"/>
</dbReference>
<dbReference type="PROSITE" id="PS50106">
    <property type="entry name" value="PDZ"/>
    <property type="match status" value="2"/>
</dbReference>